<protein>
    <recommendedName>
        <fullName evidence="1">Peptide deformylase</fullName>
        <shortName evidence="1">PDF</shortName>
        <ecNumber evidence="1">3.5.1.88</ecNumber>
    </recommendedName>
    <alternativeName>
        <fullName evidence="1">Polypeptide deformylase</fullName>
    </alternativeName>
</protein>
<gene>
    <name evidence="1" type="primary">def</name>
    <name type="ordered locus">MAP_3918c</name>
</gene>
<reference key="1">
    <citation type="journal article" date="2005" name="Proc. Natl. Acad. Sci. U.S.A.">
        <title>The complete genome sequence of Mycobacterium avium subspecies paratuberculosis.</title>
        <authorList>
            <person name="Li L."/>
            <person name="Bannantine J.P."/>
            <person name="Zhang Q."/>
            <person name="Amonsin A."/>
            <person name="May B.J."/>
            <person name="Alt D."/>
            <person name="Banerji N."/>
            <person name="Kanjilal S."/>
            <person name="Kapur V."/>
        </authorList>
    </citation>
    <scope>NUCLEOTIDE SEQUENCE [LARGE SCALE GENOMIC DNA]</scope>
    <source>
        <strain>ATCC BAA-968 / K-10</strain>
    </source>
</reference>
<dbReference type="EC" id="3.5.1.88" evidence="1"/>
<dbReference type="EMBL" id="AE016958">
    <property type="protein sequence ID" value="AAS06468.1"/>
    <property type="molecule type" value="Genomic_DNA"/>
</dbReference>
<dbReference type="RefSeq" id="WP_003873791.1">
    <property type="nucleotide sequence ID" value="NZ_CP106873.1"/>
</dbReference>
<dbReference type="SMR" id="Q73T03"/>
<dbReference type="STRING" id="262316.MAP_3918c"/>
<dbReference type="KEGG" id="mpa:MAP_3918c"/>
<dbReference type="eggNOG" id="COG0242">
    <property type="taxonomic scope" value="Bacteria"/>
</dbReference>
<dbReference type="HOGENOM" id="CLU_061901_1_2_11"/>
<dbReference type="Proteomes" id="UP000000580">
    <property type="component" value="Chromosome"/>
</dbReference>
<dbReference type="GO" id="GO:0046872">
    <property type="term" value="F:metal ion binding"/>
    <property type="evidence" value="ECO:0007669"/>
    <property type="project" value="UniProtKB-KW"/>
</dbReference>
<dbReference type="GO" id="GO:0042586">
    <property type="term" value="F:peptide deformylase activity"/>
    <property type="evidence" value="ECO:0007669"/>
    <property type="project" value="UniProtKB-UniRule"/>
</dbReference>
<dbReference type="GO" id="GO:0043686">
    <property type="term" value="P:co-translational protein modification"/>
    <property type="evidence" value="ECO:0007669"/>
    <property type="project" value="TreeGrafter"/>
</dbReference>
<dbReference type="GO" id="GO:0006412">
    <property type="term" value="P:translation"/>
    <property type="evidence" value="ECO:0007669"/>
    <property type="project" value="UniProtKB-UniRule"/>
</dbReference>
<dbReference type="CDD" id="cd00487">
    <property type="entry name" value="Pep_deformylase"/>
    <property type="match status" value="1"/>
</dbReference>
<dbReference type="Gene3D" id="3.90.45.10">
    <property type="entry name" value="Peptide deformylase"/>
    <property type="match status" value="1"/>
</dbReference>
<dbReference type="HAMAP" id="MF_00163">
    <property type="entry name" value="Pep_deformylase"/>
    <property type="match status" value="1"/>
</dbReference>
<dbReference type="InterPro" id="IPR023635">
    <property type="entry name" value="Peptide_deformylase"/>
</dbReference>
<dbReference type="InterPro" id="IPR036821">
    <property type="entry name" value="Peptide_deformylase_sf"/>
</dbReference>
<dbReference type="NCBIfam" id="TIGR00079">
    <property type="entry name" value="pept_deformyl"/>
    <property type="match status" value="1"/>
</dbReference>
<dbReference type="NCBIfam" id="NF001159">
    <property type="entry name" value="PRK00150.1-3"/>
    <property type="match status" value="1"/>
</dbReference>
<dbReference type="NCBIfam" id="NF009483">
    <property type="entry name" value="PRK12846.1-4"/>
    <property type="match status" value="1"/>
</dbReference>
<dbReference type="PANTHER" id="PTHR10458">
    <property type="entry name" value="PEPTIDE DEFORMYLASE"/>
    <property type="match status" value="1"/>
</dbReference>
<dbReference type="PANTHER" id="PTHR10458:SF2">
    <property type="entry name" value="PEPTIDE DEFORMYLASE, MITOCHONDRIAL"/>
    <property type="match status" value="1"/>
</dbReference>
<dbReference type="Pfam" id="PF01327">
    <property type="entry name" value="Pep_deformylase"/>
    <property type="match status" value="1"/>
</dbReference>
<dbReference type="PIRSF" id="PIRSF004749">
    <property type="entry name" value="Pep_def"/>
    <property type="match status" value="1"/>
</dbReference>
<dbReference type="PRINTS" id="PR01576">
    <property type="entry name" value="PDEFORMYLASE"/>
</dbReference>
<dbReference type="SUPFAM" id="SSF56420">
    <property type="entry name" value="Peptide deformylase"/>
    <property type="match status" value="1"/>
</dbReference>
<proteinExistence type="inferred from homology"/>
<keyword id="KW-0378">Hydrolase</keyword>
<keyword id="KW-0408">Iron</keyword>
<keyword id="KW-0479">Metal-binding</keyword>
<keyword id="KW-0648">Protein biosynthesis</keyword>
<keyword id="KW-1185">Reference proteome</keyword>
<comment type="function">
    <text evidence="1">Removes the formyl group from the N-terminal Met of newly synthesized proteins. Requires at least a dipeptide for an efficient rate of reaction. N-terminal L-methionine is a prerequisite for activity but the enzyme has broad specificity at other positions.</text>
</comment>
<comment type="catalytic activity">
    <reaction evidence="1">
        <text>N-terminal N-formyl-L-methionyl-[peptide] + H2O = N-terminal L-methionyl-[peptide] + formate</text>
        <dbReference type="Rhea" id="RHEA:24420"/>
        <dbReference type="Rhea" id="RHEA-COMP:10639"/>
        <dbReference type="Rhea" id="RHEA-COMP:10640"/>
        <dbReference type="ChEBI" id="CHEBI:15377"/>
        <dbReference type="ChEBI" id="CHEBI:15740"/>
        <dbReference type="ChEBI" id="CHEBI:49298"/>
        <dbReference type="ChEBI" id="CHEBI:64731"/>
        <dbReference type="EC" id="3.5.1.88"/>
    </reaction>
</comment>
<comment type="cofactor">
    <cofactor evidence="1">
        <name>Fe(2+)</name>
        <dbReference type="ChEBI" id="CHEBI:29033"/>
    </cofactor>
    <text evidence="1">Binds 1 Fe(2+) ion.</text>
</comment>
<comment type="similarity">
    <text evidence="1">Belongs to the polypeptide deformylase family.</text>
</comment>
<feature type="chain" id="PRO_0000301058" description="Peptide deformylase">
    <location>
        <begin position="1"/>
        <end position="197"/>
    </location>
</feature>
<feature type="active site" evidence="1">
    <location>
        <position position="149"/>
    </location>
</feature>
<feature type="binding site" evidence="1">
    <location>
        <position position="106"/>
    </location>
    <ligand>
        <name>Fe cation</name>
        <dbReference type="ChEBI" id="CHEBI:24875"/>
    </ligand>
</feature>
<feature type="binding site" evidence="1">
    <location>
        <position position="148"/>
    </location>
    <ligand>
        <name>Fe cation</name>
        <dbReference type="ChEBI" id="CHEBI:24875"/>
    </ligand>
</feature>
<feature type="binding site" evidence="1">
    <location>
        <position position="152"/>
    </location>
    <ligand>
        <name>Fe cation</name>
        <dbReference type="ChEBI" id="CHEBI:24875"/>
    </ligand>
</feature>
<evidence type="ECO:0000255" key="1">
    <source>
        <dbReference type="HAMAP-Rule" id="MF_00163"/>
    </source>
</evidence>
<name>DEF_MYCPA</name>
<accession>Q73T03</accession>
<sequence>MAVVPIRIVGDPVLHTPTQPVPVGDDGSLPADLGKLIADMYDTMDAAHGVGLAANQIGVGLRVFVYDCADDRGLTERRRGVVVNPVLETSEIPETMPDPDTDDEGCLSVPGESFPTGRASWARVTGLDADGNPVSIEGHGLFARMLQHETGHLDGFLYLDRLIGRYARSAKRAVKSHNWGVPGLSWMPGEGPDPFGH</sequence>
<organism>
    <name type="scientific">Mycolicibacterium paratuberculosis (strain ATCC BAA-968 / K-10)</name>
    <name type="common">Mycobacterium paratuberculosis</name>
    <dbReference type="NCBI Taxonomy" id="262316"/>
    <lineage>
        <taxon>Bacteria</taxon>
        <taxon>Bacillati</taxon>
        <taxon>Actinomycetota</taxon>
        <taxon>Actinomycetes</taxon>
        <taxon>Mycobacteriales</taxon>
        <taxon>Mycobacteriaceae</taxon>
        <taxon>Mycobacterium</taxon>
        <taxon>Mycobacterium avium complex (MAC)</taxon>
    </lineage>
</organism>